<protein>
    <recommendedName>
        <fullName evidence="1">Alanine racemase</fullName>
        <ecNumber evidence="1">5.1.1.1</ecNumber>
    </recommendedName>
</protein>
<dbReference type="EC" id="5.1.1.1" evidence="1"/>
<dbReference type="EMBL" id="CP000264">
    <property type="protein sequence ID" value="ABD54656.1"/>
    <property type="molecule type" value="Genomic_DNA"/>
</dbReference>
<dbReference type="RefSeq" id="WP_011454861.1">
    <property type="nucleotide sequence ID" value="NC_007802.1"/>
</dbReference>
<dbReference type="SMR" id="Q28RK6"/>
<dbReference type="STRING" id="290400.Jann_1739"/>
<dbReference type="KEGG" id="jan:Jann_1739"/>
<dbReference type="eggNOG" id="COG0787">
    <property type="taxonomic scope" value="Bacteria"/>
</dbReference>
<dbReference type="HOGENOM" id="CLU_028393_1_1_5"/>
<dbReference type="OrthoDB" id="9813814at2"/>
<dbReference type="UniPathway" id="UPA00042">
    <property type="reaction ID" value="UER00497"/>
</dbReference>
<dbReference type="Proteomes" id="UP000008326">
    <property type="component" value="Chromosome"/>
</dbReference>
<dbReference type="GO" id="GO:0005829">
    <property type="term" value="C:cytosol"/>
    <property type="evidence" value="ECO:0007669"/>
    <property type="project" value="TreeGrafter"/>
</dbReference>
<dbReference type="GO" id="GO:0008784">
    <property type="term" value="F:alanine racemase activity"/>
    <property type="evidence" value="ECO:0007669"/>
    <property type="project" value="UniProtKB-UniRule"/>
</dbReference>
<dbReference type="GO" id="GO:0030170">
    <property type="term" value="F:pyridoxal phosphate binding"/>
    <property type="evidence" value="ECO:0007669"/>
    <property type="project" value="UniProtKB-UniRule"/>
</dbReference>
<dbReference type="GO" id="GO:0030632">
    <property type="term" value="P:D-alanine biosynthetic process"/>
    <property type="evidence" value="ECO:0007669"/>
    <property type="project" value="UniProtKB-UniRule"/>
</dbReference>
<dbReference type="CDD" id="cd00430">
    <property type="entry name" value="PLPDE_III_AR"/>
    <property type="match status" value="1"/>
</dbReference>
<dbReference type="Gene3D" id="3.20.20.10">
    <property type="entry name" value="Alanine racemase"/>
    <property type="match status" value="1"/>
</dbReference>
<dbReference type="Gene3D" id="2.40.37.10">
    <property type="entry name" value="Lyase, Ornithine Decarboxylase, Chain A, domain 1"/>
    <property type="match status" value="1"/>
</dbReference>
<dbReference type="HAMAP" id="MF_01201">
    <property type="entry name" value="Ala_racemase"/>
    <property type="match status" value="1"/>
</dbReference>
<dbReference type="InterPro" id="IPR000821">
    <property type="entry name" value="Ala_racemase"/>
</dbReference>
<dbReference type="InterPro" id="IPR009006">
    <property type="entry name" value="Ala_racemase/Decarboxylase_C"/>
</dbReference>
<dbReference type="InterPro" id="IPR011079">
    <property type="entry name" value="Ala_racemase_C"/>
</dbReference>
<dbReference type="InterPro" id="IPR001608">
    <property type="entry name" value="Ala_racemase_N"/>
</dbReference>
<dbReference type="InterPro" id="IPR020622">
    <property type="entry name" value="Ala_racemase_pyridoxalP-BS"/>
</dbReference>
<dbReference type="InterPro" id="IPR029066">
    <property type="entry name" value="PLP-binding_barrel"/>
</dbReference>
<dbReference type="NCBIfam" id="TIGR00492">
    <property type="entry name" value="alr"/>
    <property type="match status" value="1"/>
</dbReference>
<dbReference type="PANTHER" id="PTHR30511">
    <property type="entry name" value="ALANINE RACEMASE"/>
    <property type="match status" value="1"/>
</dbReference>
<dbReference type="PANTHER" id="PTHR30511:SF0">
    <property type="entry name" value="ALANINE RACEMASE, CATABOLIC-RELATED"/>
    <property type="match status" value="1"/>
</dbReference>
<dbReference type="Pfam" id="PF00842">
    <property type="entry name" value="Ala_racemase_C"/>
    <property type="match status" value="1"/>
</dbReference>
<dbReference type="Pfam" id="PF01168">
    <property type="entry name" value="Ala_racemase_N"/>
    <property type="match status" value="1"/>
</dbReference>
<dbReference type="PRINTS" id="PR00992">
    <property type="entry name" value="ALARACEMASE"/>
</dbReference>
<dbReference type="SMART" id="SM01005">
    <property type="entry name" value="Ala_racemase_C"/>
    <property type="match status" value="1"/>
</dbReference>
<dbReference type="SUPFAM" id="SSF50621">
    <property type="entry name" value="Alanine racemase C-terminal domain-like"/>
    <property type="match status" value="1"/>
</dbReference>
<dbReference type="SUPFAM" id="SSF51419">
    <property type="entry name" value="PLP-binding barrel"/>
    <property type="match status" value="1"/>
</dbReference>
<dbReference type="PROSITE" id="PS00395">
    <property type="entry name" value="ALANINE_RACEMASE"/>
    <property type="match status" value="1"/>
</dbReference>
<accession>Q28RK6</accession>
<organism>
    <name type="scientific">Jannaschia sp. (strain CCS1)</name>
    <dbReference type="NCBI Taxonomy" id="290400"/>
    <lineage>
        <taxon>Bacteria</taxon>
        <taxon>Pseudomonadati</taxon>
        <taxon>Pseudomonadota</taxon>
        <taxon>Alphaproteobacteria</taxon>
        <taxon>Rhodobacterales</taxon>
        <taxon>Roseobacteraceae</taxon>
        <taxon>Jannaschia</taxon>
    </lineage>
</organism>
<proteinExistence type="inferred from homology"/>
<comment type="function">
    <text evidence="1">Catalyzes the interconversion of L-alanine and D-alanine. May also act on other amino acids.</text>
</comment>
<comment type="catalytic activity">
    <reaction evidence="1">
        <text>L-alanine = D-alanine</text>
        <dbReference type="Rhea" id="RHEA:20249"/>
        <dbReference type="ChEBI" id="CHEBI:57416"/>
        <dbReference type="ChEBI" id="CHEBI:57972"/>
        <dbReference type="EC" id="5.1.1.1"/>
    </reaction>
</comment>
<comment type="cofactor">
    <cofactor evidence="1">
        <name>pyridoxal 5'-phosphate</name>
        <dbReference type="ChEBI" id="CHEBI:597326"/>
    </cofactor>
</comment>
<comment type="pathway">
    <text evidence="1">Amino-acid biosynthesis; D-alanine biosynthesis; D-alanine from L-alanine: step 1/1.</text>
</comment>
<comment type="similarity">
    <text evidence="1">Belongs to the alanine racemase family.</text>
</comment>
<feature type="chain" id="PRO_1000138604" description="Alanine racemase">
    <location>
        <begin position="1"/>
        <end position="342"/>
    </location>
</feature>
<feature type="active site" description="Proton acceptor; specific for D-alanine" evidence="1">
    <location>
        <position position="33"/>
    </location>
</feature>
<feature type="active site" description="Proton acceptor; specific for L-alanine" evidence="1">
    <location>
        <position position="240"/>
    </location>
</feature>
<feature type="binding site" evidence="1">
    <location>
        <position position="128"/>
    </location>
    <ligand>
        <name>substrate</name>
    </ligand>
</feature>
<feature type="binding site" evidence="1">
    <location>
        <position position="288"/>
    </location>
    <ligand>
        <name>substrate</name>
    </ligand>
</feature>
<feature type="modified residue" description="N6-(pyridoxal phosphate)lysine" evidence="1">
    <location>
        <position position="33"/>
    </location>
</feature>
<evidence type="ECO:0000255" key="1">
    <source>
        <dbReference type="HAMAP-Rule" id="MF_01201"/>
    </source>
</evidence>
<name>ALR_JANSC</name>
<sequence length="342" mass="35809">MATGTLTVDLGALVANYRTLDRLGPGATAAVVKADGYGLGAGLVSTGLAKAGACQFFVATAEEGVGLRQVLGPAPEINVFAGHMAGDTPLIRDAHLTPMLNSPKQVQRHRHVLPGHPYGIQLDTGMHRLGVQPADWPALRDQLHDATLLMSHLACADAPDHPQNAAQLAQFRALTDGIQTPRSLAATGGTLMGPDYHFDLIRPGVGLYGGLPFAGARPVVRLSLPVIQIRCVNPGATIGYGATYTATTPRQIATLSAGYADGLIRALSSKATLWDGDTPCPLVGRVSMDLLTVDVTDCDTPPEALDILGPHQTIDQLAEAAGTIGYEILTSLGPRYRRALTP</sequence>
<keyword id="KW-0413">Isomerase</keyword>
<keyword id="KW-0663">Pyridoxal phosphate</keyword>
<keyword id="KW-1185">Reference proteome</keyword>
<gene>
    <name type="primary">alr</name>
    <name type="ordered locus">Jann_1739</name>
</gene>
<reference key="1">
    <citation type="submission" date="2006-02" db="EMBL/GenBank/DDBJ databases">
        <title>Complete sequence of chromosome of Jannaschia sp. CCS1.</title>
        <authorList>
            <consortium name="US DOE Joint Genome Institute"/>
            <person name="Copeland A."/>
            <person name="Lucas S."/>
            <person name="Lapidus A."/>
            <person name="Barry K."/>
            <person name="Detter J.C."/>
            <person name="Glavina del Rio T."/>
            <person name="Hammon N."/>
            <person name="Israni S."/>
            <person name="Pitluck S."/>
            <person name="Brettin T."/>
            <person name="Bruce D."/>
            <person name="Han C."/>
            <person name="Tapia R."/>
            <person name="Gilna P."/>
            <person name="Chertkov O."/>
            <person name="Saunders E."/>
            <person name="Schmutz J."/>
            <person name="Larimer F."/>
            <person name="Land M."/>
            <person name="Kyrpides N."/>
            <person name="Lykidis A."/>
            <person name="Moran M.A."/>
            <person name="Belas R."/>
            <person name="Ye W."/>
            <person name="Buchan A."/>
            <person name="Gonzalez J.M."/>
            <person name="Schell M.A."/>
            <person name="Richardson P."/>
        </authorList>
    </citation>
    <scope>NUCLEOTIDE SEQUENCE [LARGE SCALE GENOMIC DNA]</scope>
    <source>
        <strain>CCS1</strain>
    </source>
</reference>